<accession>P28480</accession>
<comment type="function">
    <text evidence="2">Component of the chaperonin-containing T-complex (TRiC), a molecular chaperone complex that assists the folding of actin, tubulin and other proteins upon ATP hydrolysis. The TRiC complex mediates the folding of WRAP53/TCAB1, thereby regulating telomere maintenance. As part of the TRiC complex may play a role in the assembly of BBSome, a complex involved in ciliogenesis regulating transports vesicles to the cilia.</text>
</comment>
<comment type="catalytic activity">
    <reaction evidence="2">
        <text>ATP + H2O = ADP + phosphate + H(+)</text>
        <dbReference type="Rhea" id="RHEA:13065"/>
        <dbReference type="ChEBI" id="CHEBI:15377"/>
        <dbReference type="ChEBI" id="CHEBI:15378"/>
        <dbReference type="ChEBI" id="CHEBI:30616"/>
        <dbReference type="ChEBI" id="CHEBI:43474"/>
        <dbReference type="ChEBI" id="CHEBI:456216"/>
    </reaction>
</comment>
<comment type="subunit">
    <text evidence="2">Component of the chaperonin-containing T-complex (TRiC), a hexadecamer composed of two identical back-to-back stacked rings enclosing a protein folding chamber. Each ring is made up of eight different subunits: TCP1/CCT1, CCT2, CCT3, CCT4, CCT5, CCT6A/CCT6, CCT7, CCT8. Interacts with PACRG. Interacts with GBA1. Interacts with DLEC1.</text>
</comment>
<comment type="subcellular location">
    <subcellularLocation>
        <location evidence="2">Cytoplasm</location>
        <location evidence="2">Cytosol</location>
    </subcellularLocation>
    <subcellularLocation>
        <location evidence="2">Cytoplasm</location>
        <location evidence="2">Cytoskeleton</location>
        <location evidence="2">Microtubule organizing center</location>
        <location evidence="2">Centrosome</location>
    </subcellularLocation>
</comment>
<comment type="similarity">
    <text evidence="3">Belongs to the TCP-1 chaperonin family.</text>
</comment>
<name>TCPA_RAT</name>
<sequence length="556" mass="60360">MEGPLSVFGDRSTGEAIRSQNVMAAASIANIVKSSLGPVGLDKMLVDDIGDVTITNDGATILKLLEVEHPAAKVLCELADLQDKEVGDGTTSVVIIAAELLKNADELVKQKIHPTSVISGYRLACKEAVRYINENLIINTDELGRDCLINAAKTSMSSKIIGINGDFFANMVVDAVLAVKYTDIRGQPRYPVNSVNILKAHGRSQIESMLINGYALNCVVGSQGMLKRIVNAKIACLDFSLQKTKMKLGVQVVITDPEKLDQIRQRESDITKERIQKILATGANVILTTGGIDDMCLKYFVEAGAMAVRRVLKRDLKRIAKASGASILSTLANLEGEETFEATMLGQAEEVVQERICDDELILIKNTKARTSASIILRGANDFMCDEMERSLHDALCVVKRVLESKSVVPGGGAVEAALSIYLENYATSMGSREQLAIAEFARSLLVIPNTLAVNAAQDSTDLVAKLRAFHNEAQVNPERKNLKWIGLDLVHGKPRDNKQAGVFEPTIVKVKSLKFATEAAITILRIDDLIKLHPESKDDKHGGYENAVHSGALDD</sequence>
<keyword id="KW-0007">Acetylation</keyword>
<keyword id="KW-0067">ATP-binding</keyword>
<keyword id="KW-0143">Chaperone</keyword>
<keyword id="KW-0963">Cytoplasm</keyword>
<keyword id="KW-0206">Cytoskeleton</keyword>
<keyword id="KW-0903">Direct protein sequencing</keyword>
<keyword id="KW-0378">Hydrolase</keyword>
<keyword id="KW-0460">Magnesium</keyword>
<keyword id="KW-0479">Metal-binding</keyword>
<keyword id="KW-0547">Nucleotide-binding</keyword>
<keyword id="KW-0597">Phosphoprotein</keyword>
<keyword id="KW-1185">Reference proteome</keyword>
<protein>
    <recommendedName>
        <fullName>T-complex protein 1 subunit alpha</fullName>
        <shortName>TCP-1-alpha</shortName>
        <ecNumber evidence="2">3.6.1.-</ecNumber>
    </recommendedName>
    <alternativeName>
        <fullName>CCT-alpha</fullName>
    </alternativeName>
</protein>
<proteinExistence type="evidence at protein level"/>
<gene>
    <name type="primary">Tcp1</name>
    <name type="synonym">Cct1</name>
    <name type="synonym">Ccta</name>
</gene>
<dbReference type="EC" id="3.6.1.-" evidence="2"/>
<dbReference type="EMBL" id="D90345">
    <property type="protein sequence ID" value="BAA14357.1"/>
    <property type="molecule type" value="mRNA"/>
</dbReference>
<dbReference type="PIR" id="JQ0866">
    <property type="entry name" value="JQ0866"/>
</dbReference>
<dbReference type="RefSeq" id="NP_036802.1">
    <property type="nucleotide sequence ID" value="NM_012670.1"/>
</dbReference>
<dbReference type="SMR" id="P28480"/>
<dbReference type="BioGRID" id="246940">
    <property type="interactions" value="7"/>
</dbReference>
<dbReference type="FunCoup" id="P28480">
    <property type="interactions" value="4146"/>
</dbReference>
<dbReference type="IntAct" id="P28480">
    <property type="interactions" value="4"/>
</dbReference>
<dbReference type="MINT" id="P28480"/>
<dbReference type="STRING" id="10116.ENSRNOP00000019531"/>
<dbReference type="GlyGen" id="P28480">
    <property type="glycosylation" value="1 site, 1 O-linked glycan (1 site)"/>
</dbReference>
<dbReference type="iPTMnet" id="P28480"/>
<dbReference type="PhosphoSitePlus" id="P28480"/>
<dbReference type="SwissPalm" id="P28480"/>
<dbReference type="jPOST" id="P28480"/>
<dbReference type="PaxDb" id="10116-ENSRNOP00000019531"/>
<dbReference type="Ensembl" id="ENSRNOT00000019531.5">
    <property type="protein sequence ID" value="ENSRNOP00000019531.1"/>
    <property type="gene ID" value="ENSRNOG00000014160.5"/>
</dbReference>
<dbReference type="GeneID" id="24818"/>
<dbReference type="KEGG" id="rno:24818"/>
<dbReference type="AGR" id="RGD:3832"/>
<dbReference type="CTD" id="6950"/>
<dbReference type="RGD" id="3832">
    <property type="gene designation" value="Tcp1"/>
</dbReference>
<dbReference type="eggNOG" id="KOG0360">
    <property type="taxonomic scope" value="Eukaryota"/>
</dbReference>
<dbReference type="GeneTree" id="ENSGT00550000074878"/>
<dbReference type="HOGENOM" id="CLU_008891_5_1_1"/>
<dbReference type="InParanoid" id="P28480"/>
<dbReference type="OMA" id="RGPNDYQ"/>
<dbReference type="OrthoDB" id="496at2759"/>
<dbReference type="PhylomeDB" id="P28480"/>
<dbReference type="TreeFam" id="TF106331"/>
<dbReference type="BRENDA" id="3.6.4.B10">
    <property type="organism ID" value="5301"/>
</dbReference>
<dbReference type="Reactome" id="R-RNO-390471">
    <property type="pathway name" value="Association of TriC/CCT with target proteins during biosynthesis"/>
</dbReference>
<dbReference type="Reactome" id="R-RNO-6814122">
    <property type="pathway name" value="Cooperation of PDCL (PhLP1) and TRiC/CCT in G-protein beta folding"/>
</dbReference>
<dbReference type="PRO" id="PR:P28480"/>
<dbReference type="Proteomes" id="UP000002494">
    <property type="component" value="Chromosome 1"/>
</dbReference>
<dbReference type="Bgee" id="ENSRNOG00000014160">
    <property type="expression patterns" value="Expressed in thymus and 19 other cell types or tissues"/>
</dbReference>
<dbReference type="ExpressionAtlas" id="P28480">
    <property type="expression patterns" value="baseline and differential"/>
</dbReference>
<dbReference type="GO" id="GO:0001669">
    <property type="term" value="C:acrosomal vesicle"/>
    <property type="evidence" value="ECO:0000266"/>
    <property type="project" value="RGD"/>
</dbReference>
<dbReference type="GO" id="GO:0044297">
    <property type="term" value="C:cell body"/>
    <property type="evidence" value="ECO:0000266"/>
    <property type="project" value="RGD"/>
</dbReference>
<dbReference type="GO" id="GO:0005813">
    <property type="term" value="C:centrosome"/>
    <property type="evidence" value="ECO:0000266"/>
    <property type="project" value="RGD"/>
</dbReference>
<dbReference type="GO" id="GO:0005832">
    <property type="term" value="C:chaperonin-containing T-complex"/>
    <property type="evidence" value="ECO:0000250"/>
    <property type="project" value="UniProtKB"/>
</dbReference>
<dbReference type="GO" id="GO:0005794">
    <property type="term" value="C:Golgi apparatus"/>
    <property type="evidence" value="ECO:0000266"/>
    <property type="project" value="RGD"/>
</dbReference>
<dbReference type="GO" id="GO:0000792">
    <property type="term" value="C:heterochromatin"/>
    <property type="evidence" value="ECO:0000314"/>
    <property type="project" value="RGD"/>
</dbReference>
<dbReference type="GO" id="GO:0005874">
    <property type="term" value="C:microtubule"/>
    <property type="evidence" value="ECO:0000266"/>
    <property type="project" value="RGD"/>
</dbReference>
<dbReference type="GO" id="GO:0005815">
    <property type="term" value="C:microtubule organizing center"/>
    <property type="evidence" value="ECO:0000266"/>
    <property type="project" value="RGD"/>
</dbReference>
<dbReference type="GO" id="GO:0000242">
    <property type="term" value="C:pericentriolar material"/>
    <property type="evidence" value="ECO:0000266"/>
    <property type="project" value="RGD"/>
</dbReference>
<dbReference type="GO" id="GO:0002199">
    <property type="term" value="C:zona pellucida receptor complex"/>
    <property type="evidence" value="ECO:0000266"/>
    <property type="project" value="RGD"/>
</dbReference>
<dbReference type="GO" id="GO:0005524">
    <property type="term" value="F:ATP binding"/>
    <property type="evidence" value="ECO:0007669"/>
    <property type="project" value="UniProtKB-KW"/>
</dbReference>
<dbReference type="GO" id="GO:0016887">
    <property type="term" value="F:ATP hydrolysis activity"/>
    <property type="evidence" value="ECO:0007669"/>
    <property type="project" value="InterPro"/>
</dbReference>
<dbReference type="GO" id="GO:0140662">
    <property type="term" value="F:ATP-dependent protein folding chaperone"/>
    <property type="evidence" value="ECO:0007669"/>
    <property type="project" value="InterPro"/>
</dbReference>
<dbReference type="GO" id="GO:0044183">
    <property type="term" value="F:protein folding chaperone"/>
    <property type="evidence" value="ECO:0000266"/>
    <property type="project" value="RGD"/>
</dbReference>
<dbReference type="GO" id="GO:0031625">
    <property type="term" value="F:ubiquitin protein ligase binding"/>
    <property type="evidence" value="ECO:0000266"/>
    <property type="project" value="RGD"/>
</dbReference>
<dbReference type="GO" id="GO:0051082">
    <property type="term" value="F:unfolded protein binding"/>
    <property type="evidence" value="ECO:0000318"/>
    <property type="project" value="GO_Central"/>
</dbReference>
<dbReference type="GO" id="GO:0007339">
    <property type="term" value="P:binding of sperm to zona pellucida"/>
    <property type="evidence" value="ECO:0000266"/>
    <property type="project" value="RGD"/>
</dbReference>
<dbReference type="GO" id="GO:0051086">
    <property type="term" value="P:chaperone mediated protein folding independent of cofactor"/>
    <property type="evidence" value="ECO:0000266"/>
    <property type="project" value="RGD"/>
</dbReference>
<dbReference type="GO" id="GO:0061077">
    <property type="term" value="P:chaperone-mediated protein folding"/>
    <property type="evidence" value="ECO:0000266"/>
    <property type="project" value="RGD"/>
</dbReference>
<dbReference type="GO" id="GO:1904851">
    <property type="term" value="P:positive regulation of establishment of protein localization to telomere"/>
    <property type="evidence" value="ECO:0000266"/>
    <property type="project" value="RGD"/>
</dbReference>
<dbReference type="GO" id="GO:1904874">
    <property type="term" value="P:positive regulation of telomerase RNA localization to Cajal body"/>
    <property type="evidence" value="ECO:0000266"/>
    <property type="project" value="RGD"/>
</dbReference>
<dbReference type="GO" id="GO:0032212">
    <property type="term" value="P:positive regulation of telomere maintenance via telomerase"/>
    <property type="evidence" value="ECO:0000266"/>
    <property type="project" value="RGD"/>
</dbReference>
<dbReference type="GO" id="GO:0006457">
    <property type="term" value="P:protein folding"/>
    <property type="evidence" value="ECO:0000266"/>
    <property type="project" value="RGD"/>
</dbReference>
<dbReference type="GO" id="GO:0050821">
    <property type="term" value="P:protein stabilization"/>
    <property type="evidence" value="ECO:0000266"/>
    <property type="project" value="RGD"/>
</dbReference>
<dbReference type="GO" id="GO:0090666">
    <property type="term" value="P:scaRNA localization to Cajal body"/>
    <property type="evidence" value="ECO:0000266"/>
    <property type="project" value="RGD"/>
</dbReference>
<dbReference type="GO" id="GO:0007286">
    <property type="term" value="P:spermatid development"/>
    <property type="evidence" value="ECO:0000304"/>
    <property type="project" value="RGD"/>
</dbReference>
<dbReference type="CDD" id="cd03335">
    <property type="entry name" value="TCP1_alpha"/>
    <property type="match status" value="1"/>
</dbReference>
<dbReference type="FunFam" id="3.50.7.10:FF:000009">
    <property type="entry name" value="T-complex protein 1 subunit alpha"/>
    <property type="match status" value="1"/>
</dbReference>
<dbReference type="FunFam" id="3.30.260.10:FF:000022">
    <property type="entry name" value="T-complex protein 1 subunit eta"/>
    <property type="match status" value="1"/>
</dbReference>
<dbReference type="FunFam" id="1.10.560.10:FF:000070">
    <property type="entry name" value="Uncharacterized protein"/>
    <property type="match status" value="1"/>
</dbReference>
<dbReference type="FunFam" id="3.30.260.10:FF:000040">
    <property type="entry name" value="Uncharacterized protein"/>
    <property type="match status" value="1"/>
</dbReference>
<dbReference type="Gene3D" id="3.50.7.10">
    <property type="entry name" value="GroEL"/>
    <property type="match status" value="1"/>
</dbReference>
<dbReference type="Gene3D" id="1.10.560.10">
    <property type="entry name" value="GroEL-like equatorial domain"/>
    <property type="match status" value="1"/>
</dbReference>
<dbReference type="Gene3D" id="3.30.260.10">
    <property type="entry name" value="TCP-1-like chaperonin intermediate domain"/>
    <property type="match status" value="1"/>
</dbReference>
<dbReference type="InterPro" id="IPR012715">
    <property type="entry name" value="Chap_CCT_alpha"/>
</dbReference>
<dbReference type="InterPro" id="IPR017998">
    <property type="entry name" value="Chaperone_TCP-1"/>
</dbReference>
<dbReference type="InterPro" id="IPR002194">
    <property type="entry name" value="Chaperonin_TCP-1_CS"/>
</dbReference>
<dbReference type="InterPro" id="IPR002423">
    <property type="entry name" value="Cpn60/GroEL/TCP-1"/>
</dbReference>
<dbReference type="InterPro" id="IPR027409">
    <property type="entry name" value="GroEL-like_apical_dom_sf"/>
</dbReference>
<dbReference type="InterPro" id="IPR027413">
    <property type="entry name" value="GROEL-like_equatorial_sf"/>
</dbReference>
<dbReference type="InterPro" id="IPR027410">
    <property type="entry name" value="TCP-1-like_intermed_sf"/>
</dbReference>
<dbReference type="InterPro" id="IPR053374">
    <property type="entry name" value="TCP-1_chaperonin"/>
</dbReference>
<dbReference type="InterPro" id="IPR054827">
    <property type="entry name" value="thermosome_alpha"/>
</dbReference>
<dbReference type="NCBIfam" id="TIGR02340">
    <property type="entry name" value="chap_CCT_alpha"/>
    <property type="match status" value="1"/>
</dbReference>
<dbReference type="NCBIfam" id="NF041082">
    <property type="entry name" value="thermosome_alpha"/>
    <property type="match status" value="1"/>
</dbReference>
<dbReference type="NCBIfam" id="NF041083">
    <property type="entry name" value="thermosome_beta"/>
    <property type="match status" value="1"/>
</dbReference>
<dbReference type="PANTHER" id="PTHR11353">
    <property type="entry name" value="CHAPERONIN"/>
    <property type="match status" value="1"/>
</dbReference>
<dbReference type="Pfam" id="PF00118">
    <property type="entry name" value="Cpn60_TCP1"/>
    <property type="match status" value="1"/>
</dbReference>
<dbReference type="PRINTS" id="PR00304">
    <property type="entry name" value="TCOMPLEXTCP1"/>
</dbReference>
<dbReference type="SUPFAM" id="SSF52029">
    <property type="entry name" value="GroEL apical domain-like"/>
    <property type="match status" value="1"/>
</dbReference>
<dbReference type="SUPFAM" id="SSF48592">
    <property type="entry name" value="GroEL equatorial domain-like"/>
    <property type="match status" value="1"/>
</dbReference>
<dbReference type="SUPFAM" id="SSF54849">
    <property type="entry name" value="GroEL-intermediate domain like"/>
    <property type="match status" value="1"/>
</dbReference>
<dbReference type="PROSITE" id="PS00750">
    <property type="entry name" value="TCP1_1"/>
    <property type="match status" value="1"/>
</dbReference>
<dbReference type="PROSITE" id="PS00751">
    <property type="entry name" value="TCP1_2"/>
    <property type="match status" value="1"/>
</dbReference>
<dbReference type="PROSITE" id="PS00995">
    <property type="entry name" value="TCP1_3"/>
    <property type="match status" value="1"/>
</dbReference>
<evidence type="ECO:0000250" key="1">
    <source>
        <dbReference type="UniProtKB" id="P11983"/>
    </source>
</evidence>
<evidence type="ECO:0000250" key="2">
    <source>
        <dbReference type="UniProtKB" id="P17987"/>
    </source>
</evidence>
<evidence type="ECO:0000305" key="3"/>
<evidence type="ECO:0007744" key="4">
    <source>
    </source>
</evidence>
<feature type="chain" id="PRO_0000128306" description="T-complex protein 1 subunit alpha">
    <location>
        <begin position="1"/>
        <end position="556"/>
    </location>
</feature>
<feature type="binding site" evidence="2">
    <location>
        <position position="37"/>
    </location>
    <ligand>
        <name>ADP</name>
        <dbReference type="ChEBI" id="CHEBI:456216"/>
    </ligand>
</feature>
<feature type="binding site" evidence="2">
    <location>
        <position position="37"/>
    </location>
    <ligand>
        <name>ATP</name>
        <dbReference type="ChEBI" id="CHEBI:30616"/>
    </ligand>
</feature>
<feature type="binding site" evidence="2">
    <location>
        <position position="88"/>
    </location>
    <ligand>
        <name>Mg(2+)</name>
        <dbReference type="ChEBI" id="CHEBI:18420"/>
    </ligand>
</feature>
<feature type="binding site" evidence="2">
    <location>
        <position position="89"/>
    </location>
    <ligand>
        <name>ADP</name>
        <dbReference type="ChEBI" id="CHEBI:456216"/>
    </ligand>
</feature>
<feature type="binding site" evidence="2">
    <location>
        <position position="89"/>
    </location>
    <ligand>
        <name>ATP</name>
        <dbReference type="ChEBI" id="CHEBI:30616"/>
    </ligand>
</feature>
<feature type="binding site" evidence="2">
    <location>
        <position position="90"/>
    </location>
    <ligand>
        <name>ADP</name>
        <dbReference type="ChEBI" id="CHEBI:456216"/>
    </ligand>
</feature>
<feature type="binding site" evidence="2">
    <location>
        <position position="90"/>
    </location>
    <ligand>
        <name>ATP</name>
        <dbReference type="ChEBI" id="CHEBI:30616"/>
    </ligand>
</feature>
<feature type="binding site" evidence="2">
    <location>
        <position position="91"/>
    </location>
    <ligand>
        <name>ADP</name>
        <dbReference type="ChEBI" id="CHEBI:456216"/>
    </ligand>
</feature>
<feature type="binding site" evidence="2">
    <location>
        <position position="91"/>
    </location>
    <ligand>
        <name>ATP</name>
        <dbReference type="ChEBI" id="CHEBI:30616"/>
    </ligand>
</feature>
<feature type="binding site" evidence="2">
    <location>
        <position position="92"/>
    </location>
    <ligand>
        <name>ADP</name>
        <dbReference type="ChEBI" id="CHEBI:456216"/>
    </ligand>
</feature>
<feature type="binding site" evidence="2">
    <location>
        <position position="158"/>
    </location>
    <ligand>
        <name>ADP</name>
        <dbReference type="ChEBI" id="CHEBI:456216"/>
    </ligand>
</feature>
<feature type="binding site" evidence="2">
    <location>
        <position position="159"/>
    </location>
    <ligand>
        <name>ADP</name>
        <dbReference type="ChEBI" id="CHEBI:456216"/>
    </ligand>
</feature>
<feature type="binding site" evidence="2">
    <location>
        <position position="412"/>
    </location>
    <ligand>
        <name>ADP</name>
        <dbReference type="ChEBI" id="CHEBI:456216"/>
    </ligand>
</feature>
<feature type="binding site" evidence="2">
    <location>
        <position position="505"/>
    </location>
    <ligand>
        <name>ADP</name>
        <dbReference type="ChEBI" id="CHEBI:456216"/>
    </ligand>
</feature>
<feature type="modified residue" description="N-acetylmethionine" evidence="2">
    <location>
        <position position="1"/>
    </location>
</feature>
<feature type="modified residue" description="Phosphoserine" evidence="2">
    <location>
        <position position="6"/>
    </location>
</feature>
<feature type="modified residue" description="Phosphotyrosine" evidence="2">
    <location>
        <position position="181"/>
    </location>
</feature>
<feature type="modified residue" description="N6-acetyllysine" evidence="2">
    <location>
        <position position="199"/>
    </location>
</feature>
<feature type="modified residue" description="N6-acetyllysine" evidence="2">
    <location>
        <position position="400"/>
    </location>
</feature>
<feature type="modified residue" description="N6-acetyllysine" evidence="1">
    <location>
        <position position="494"/>
    </location>
</feature>
<feature type="modified residue" description="Phosphoserine" evidence="4">
    <location>
        <position position="551"/>
    </location>
</feature>
<organism>
    <name type="scientific">Rattus norvegicus</name>
    <name type="common">Rat</name>
    <dbReference type="NCBI Taxonomy" id="10116"/>
    <lineage>
        <taxon>Eukaryota</taxon>
        <taxon>Metazoa</taxon>
        <taxon>Chordata</taxon>
        <taxon>Craniata</taxon>
        <taxon>Vertebrata</taxon>
        <taxon>Euteleostomi</taxon>
        <taxon>Mammalia</taxon>
        <taxon>Eutheria</taxon>
        <taxon>Euarchontoglires</taxon>
        <taxon>Glires</taxon>
        <taxon>Rodentia</taxon>
        <taxon>Myomorpha</taxon>
        <taxon>Muroidea</taxon>
        <taxon>Muridae</taxon>
        <taxon>Murinae</taxon>
        <taxon>Rattus</taxon>
    </lineage>
</organism>
<reference key="1">
    <citation type="journal article" date="1991" name="Gene">
        <title>Nucleotide sequence of mouse Tcp-1a cDNA.</title>
        <authorList>
            <person name="Kubota H."/>
            <person name="Morita T."/>
            <person name="Nagata T."/>
            <person name="Takemoto Y."/>
            <person name="Nozaki M."/>
            <person name="Gachelin G."/>
            <person name="Matsushiro A."/>
        </authorList>
    </citation>
    <scope>NUCLEOTIDE SEQUENCE [MRNA]</scope>
</reference>
<reference key="2">
    <citation type="journal article" date="1991" name="Biochim. Biophys. Acta">
        <title>Cloning of cDNA encoding rat TCP-1.</title>
        <authorList>
            <person name="Morita T."/>
            <person name="Kubota H."/>
            <person name="Gachelin G."/>
            <person name="Nozaki M."/>
            <person name="Matsushiro A."/>
        </authorList>
    </citation>
    <scope>NUCLEOTIDE SEQUENCE [MRNA]</scope>
</reference>
<reference key="3">
    <citation type="submission" date="2006-12" db="UniProtKB">
        <authorList>
            <person name="Lubec G."/>
            <person name="Afjehi-Sadat L."/>
        </authorList>
    </citation>
    <scope>PROTEIN SEQUENCE OF 131-145; 485-496 AND 516-526</scope>
    <scope>IDENTIFICATION BY MASS SPECTROMETRY</scope>
    <source>
        <strain>Sprague-Dawley</strain>
        <tissue>Spinal cord</tissue>
    </source>
</reference>
<reference key="4">
    <citation type="journal article" date="2012" name="Nat. Commun.">
        <title>Quantitative maps of protein phosphorylation sites across 14 different rat organs and tissues.</title>
        <authorList>
            <person name="Lundby A."/>
            <person name="Secher A."/>
            <person name="Lage K."/>
            <person name="Nordsborg N.B."/>
            <person name="Dmytriyev A."/>
            <person name="Lundby C."/>
            <person name="Olsen J.V."/>
        </authorList>
    </citation>
    <scope>PHOSPHORYLATION [LARGE SCALE ANALYSIS] AT SER-551</scope>
    <scope>IDENTIFICATION BY MASS SPECTROMETRY [LARGE SCALE ANALYSIS]</scope>
</reference>